<reference key="1">
    <citation type="journal article" date="2009" name="J. Bacteriol.">
        <title>Genome sequences of three Agrobacterium biovars help elucidate the evolution of multichromosome genomes in bacteria.</title>
        <authorList>
            <person name="Slater S.C."/>
            <person name="Goldman B.S."/>
            <person name="Goodner B."/>
            <person name="Setubal J.C."/>
            <person name="Farrand S.K."/>
            <person name="Nester E.W."/>
            <person name="Burr T.J."/>
            <person name="Banta L."/>
            <person name="Dickerman A.W."/>
            <person name="Paulsen I."/>
            <person name="Otten L."/>
            <person name="Suen G."/>
            <person name="Welch R."/>
            <person name="Almeida N.F."/>
            <person name="Arnold F."/>
            <person name="Burton O.T."/>
            <person name="Du Z."/>
            <person name="Ewing A."/>
            <person name="Godsy E."/>
            <person name="Heisel S."/>
            <person name="Houmiel K.L."/>
            <person name="Jhaveri J."/>
            <person name="Lu J."/>
            <person name="Miller N.M."/>
            <person name="Norton S."/>
            <person name="Chen Q."/>
            <person name="Phoolcharoen W."/>
            <person name="Ohlin V."/>
            <person name="Ondrusek D."/>
            <person name="Pride N."/>
            <person name="Stricklin S.L."/>
            <person name="Sun J."/>
            <person name="Wheeler C."/>
            <person name="Wilson L."/>
            <person name="Zhu H."/>
            <person name="Wood D.W."/>
        </authorList>
    </citation>
    <scope>NUCLEOTIDE SEQUENCE [LARGE SCALE GENOMIC DNA]</scope>
    <source>
        <strain>K84 / ATCC BAA-868</strain>
    </source>
</reference>
<keyword id="KW-0028">Amino-acid biosynthesis</keyword>
<keyword id="KW-0170">Cobalt</keyword>
<keyword id="KW-0220">Diaminopimelate biosynthesis</keyword>
<keyword id="KW-0378">Hydrolase</keyword>
<keyword id="KW-0457">Lysine biosynthesis</keyword>
<keyword id="KW-0479">Metal-binding</keyword>
<keyword id="KW-0862">Zinc</keyword>
<organism>
    <name type="scientific">Rhizobium rhizogenes (strain K84 / ATCC BAA-868)</name>
    <name type="common">Agrobacterium radiobacter</name>
    <dbReference type="NCBI Taxonomy" id="311403"/>
    <lineage>
        <taxon>Bacteria</taxon>
        <taxon>Pseudomonadati</taxon>
        <taxon>Pseudomonadota</taxon>
        <taxon>Alphaproteobacteria</taxon>
        <taxon>Hyphomicrobiales</taxon>
        <taxon>Rhizobiaceae</taxon>
        <taxon>Rhizobium/Agrobacterium group</taxon>
        <taxon>Rhizobium</taxon>
    </lineage>
</organism>
<accession>B9J8D0</accession>
<feature type="chain" id="PRO_0000375455" description="Succinyl-diaminopimelate desuccinylase">
    <location>
        <begin position="1"/>
        <end position="397"/>
    </location>
</feature>
<feature type="active site" evidence="1">
    <location>
        <position position="75"/>
    </location>
</feature>
<feature type="active site" description="Proton acceptor" evidence="1">
    <location>
        <position position="140"/>
    </location>
</feature>
<feature type="binding site" evidence="1">
    <location>
        <position position="73"/>
    </location>
    <ligand>
        <name>Zn(2+)</name>
        <dbReference type="ChEBI" id="CHEBI:29105"/>
        <label>1</label>
    </ligand>
</feature>
<feature type="binding site" evidence="1">
    <location>
        <position position="106"/>
    </location>
    <ligand>
        <name>Zn(2+)</name>
        <dbReference type="ChEBI" id="CHEBI:29105"/>
        <label>1</label>
    </ligand>
</feature>
<feature type="binding site" evidence="1">
    <location>
        <position position="106"/>
    </location>
    <ligand>
        <name>Zn(2+)</name>
        <dbReference type="ChEBI" id="CHEBI:29105"/>
        <label>2</label>
    </ligand>
</feature>
<feature type="binding site" evidence="1">
    <location>
        <position position="141"/>
    </location>
    <ligand>
        <name>Zn(2+)</name>
        <dbReference type="ChEBI" id="CHEBI:29105"/>
        <label>2</label>
    </ligand>
</feature>
<feature type="binding site" evidence="1">
    <location>
        <position position="169"/>
    </location>
    <ligand>
        <name>Zn(2+)</name>
        <dbReference type="ChEBI" id="CHEBI:29105"/>
        <label>1</label>
    </ligand>
</feature>
<feature type="binding site" evidence="1">
    <location>
        <position position="366"/>
    </location>
    <ligand>
        <name>Zn(2+)</name>
        <dbReference type="ChEBI" id="CHEBI:29105"/>
        <label>2</label>
    </ligand>
</feature>
<comment type="function">
    <text evidence="1">Catalyzes the hydrolysis of N-succinyl-L,L-diaminopimelic acid (SDAP), forming succinate and LL-2,6-diaminopimelate (DAP), an intermediate involved in the bacterial biosynthesis of lysine and meso-diaminopimelic acid, an essential component of bacterial cell walls.</text>
</comment>
<comment type="catalytic activity">
    <reaction evidence="1">
        <text>N-succinyl-(2S,6S)-2,6-diaminopimelate + H2O = (2S,6S)-2,6-diaminopimelate + succinate</text>
        <dbReference type="Rhea" id="RHEA:22608"/>
        <dbReference type="ChEBI" id="CHEBI:15377"/>
        <dbReference type="ChEBI" id="CHEBI:30031"/>
        <dbReference type="ChEBI" id="CHEBI:57609"/>
        <dbReference type="ChEBI" id="CHEBI:58087"/>
        <dbReference type="EC" id="3.5.1.18"/>
    </reaction>
</comment>
<comment type="cofactor">
    <cofactor evidence="1">
        <name>Zn(2+)</name>
        <dbReference type="ChEBI" id="CHEBI:29105"/>
    </cofactor>
    <cofactor evidence="1">
        <name>Co(2+)</name>
        <dbReference type="ChEBI" id="CHEBI:48828"/>
    </cofactor>
    <text evidence="1">Binds 2 Zn(2+) or Co(2+) ions per subunit.</text>
</comment>
<comment type="pathway">
    <text evidence="1">Amino-acid biosynthesis; L-lysine biosynthesis via DAP pathway; LL-2,6-diaminopimelate from (S)-tetrahydrodipicolinate (succinylase route): step 3/3.</text>
</comment>
<comment type="subunit">
    <text evidence="1">Homodimer.</text>
</comment>
<comment type="similarity">
    <text evidence="1">Belongs to the peptidase M20A family. DapE subfamily.</text>
</comment>
<dbReference type="EC" id="3.5.1.18" evidence="1"/>
<dbReference type="EMBL" id="CP000628">
    <property type="protein sequence ID" value="ACM25317.1"/>
    <property type="molecule type" value="Genomic_DNA"/>
</dbReference>
<dbReference type="RefSeq" id="WP_007695440.1">
    <property type="nucleotide sequence ID" value="NC_011985.1"/>
</dbReference>
<dbReference type="SMR" id="B9J8D0"/>
<dbReference type="STRING" id="311403.Arad_0684"/>
<dbReference type="GeneID" id="86847132"/>
<dbReference type="KEGG" id="ara:Arad_0684"/>
<dbReference type="eggNOG" id="COG0624">
    <property type="taxonomic scope" value="Bacteria"/>
</dbReference>
<dbReference type="HOGENOM" id="CLU_021802_4_0_5"/>
<dbReference type="UniPathway" id="UPA00034">
    <property type="reaction ID" value="UER00021"/>
</dbReference>
<dbReference type="Proteomes" id="UP000001600">
    <property type="component" value="Chromosome 1"/>
</dbReference>
<dbReference type="GO" id="GO:0008777">
    <property type="term" value="F:acetylornithine deacetylase activity"/>
    <property type="evidence" value="ECO:0007669"/>
    <property type="project" value="TreeGrafter"/>
</dbReference>
<dbReference type="GO" id="GO:0050897">
    <property type="term" value="F:cobalt ion binding"/>
    <property type="evidence" value="ECO:0007669"/>
    <property type="project" value="UniProtKB-UniRule"/>
</dbReference>
<dbReference type="GO" id="GO:0009014">
    <property type="term" value="F:succinyl-diaminopimelate desuccinylase activity"/>
    <property type="evidence" value="ECO:0007669"/>
    <property type="project" value="UniProtKB-UniRule"/>
</dbReference>
<dbReference type="GO" id="GO:0008270">
    <property type="term" value="F:zinc ion binding"/>
    <property type="evidence" value="ECO:0007669"/>
    <property type="project" value="UniProtKB-UniRule"/>
</dbReference>
<dbReference type="GO" id="GO:0019877">
    <property type="term" value="P:diaminopimelate biosynthetic process"/>
    <property type="evidence" value="ECO:0007669"/>
    <property type="project" value="UniProtKB-UniRule"/>
</dbReference>
<dbReference type="GO" id="GO:0006526">
    <property type="term" value="P:L-arginine biosynthetic process"/>
    <property type="evidence" value="ECO:0007669"/>
    <property type="project" value="TreeGrafter"/>
</dbReference>
<dbReference type="GO" id="GO:0009089">
    <property type="term" value="P:lysine biosynthetic process via diaminopimelate"/>
    <property type="evidence" value="ECO:0007669"/>
    <property type="project" value="UniProtKB-UniRule"/>
</dbReference>
<dbReference type="CDD" id="cd03891">
    <property type="entry name" value="M20_DapE_proteobac"/>
    <property type="match status" value="1"/>
</dbReference>
<dbReference type="Gene3D" id="3.30.70.360">
    <property type="match status" value="1"/>
</dbReference>
<dbReference type="Gene3D" id="3.40.630.10">
    <property type="entry name" value="Zn peptidases"/>
    <property type="match status" value="2"/>
</dbReference>
<dbReference type="HAMAP" id="MF_01690">
    <property type="entry name" value="DapE"/>
    <property type="match status" value="1"/>
</dbReference>
<dbReference type="InterPro" id="IPR001261">
    <property type="entry name" value="ArgE/DapE_CS"/>
</dbReference>
<dbReference type="InterPro" id="IPR036264">
    <property type="entry name" value="Bact_exopeptidase_dim_dom"/>
</dbReference>
<dbReference type="InterPro" id="IPR005941">
    <property type="entry name" value="DapE_proteobac"/>
</dbReference>
<dbReference type="InterPro" id="IPR002933">
    <property type="entry name" value="Peptidase_M20"/>
</dbReference>
<dbReference type="InterPro" id="IPR011650">
    <property type="entry name" value="Peptidase_M20_dimer"/>
</dbReference>
<dbReference type="InterPro" id="IPR050072">
    <property type="entry name" value="Peptidase_M20A"/>
</dbReference>
<dbReference type="NCBIfam" id="TIGR01246">
    <property type="entry name" value="dapE_proteo"/>
    <property type="match status" value="1"/>
</dbReference>
<dbReference type="NCBIfam" id="NF009557">
    <property type="entry name" value="PRK13009.1"/>
    <property type="match status" value="1"/>
</dbReference>
<dbReference type="PANTHER" id="PTHR43808">
    <property type="entry name" value="ACETYLORNITHINE DEACETYLASE"/>
    <property type="match status" value="1"/>
</dbReference>
<dbReference type="PANTHER" id="PTHR43808:SF31">
    <property type="entry name" value="N-ACETYL-L-CITRULLINE DEACETYLASE"/>
    <property type="match status" value="1"/>
</dbReference>
<dbReference type="Pfam" id="PF07687">
    <property type="entry name" value="M20_dimer"/>
    <property type="match status" value="1"/>
</dbReference>
<dbReference type="Pfam" id="PF01546">
    <property type="entry name" value="Peptidase_M20"/>
    <property type="match status" value="1"/>
</dbReference>
<dbReference type="SUPFAM" id="SSF55031">
    <property type="entry name" value="Bacterial exopeptidase dimerisation domain"/>
    <property type="match status" value="1"/>
</dbReference>
<dbReference type="SUPFAM" id="SSF53187">
    <property type="entry name" value="Zn-dependent exopeptidases"/>
    <property type="match status" value="1"/>
</dbReference>
<dbReference type="PROSITE" id="PS00758">
    <property type="entry name" value="ARGE_DAPE_CPG2_1"/>
    <property type="match status" value="1"/>
</dbReference>
<dbReference type="PROSITE" id="PS00759">
    <property type="entry name" value="ARGE_DAPE_CPG2_2"/>
    <property type="match status" value="1"/>
</dbReference>
<name>DAPE_RHIR8</name>
<gene>
    <name evidence="1" type="primary">dapE</name>
    <name type="ordered locus">Arad_0684</name>
</gene>
<proteinExistence type="inferred from homology"/>
<protein>
    <recommendedName>
        <fullName evidence="1">Succinyl-diaminopimelate desuccinylase</fullName>
        <shortName evidence="1">SDAP desuccinylase</shortName>
        <ecNumber evidence="1">3.5.1.18</ecNumber>
    </recommendedName>
    <alternativeName>
        <fullName evidence="1">N-succinyl-LL-2,6-diaminoheptanedioate amidohydrolase</fullName>
    </alternativeName>
</protein>
<evidence type="ECO:0000255" key="1">
    <source>
        <dbReference type="HAMAP-Rule" id="MF_01690"/>
    </source>
</evidence>
<sequence>MTATDPVANLQTLIRCASVTPAEGGALTALADMLLPLGFKVERMTASEAGTPDIENLYARLGTEGPHLMFAGHTDVVPVGDAASWSHPPFAADIAGGELFGRGAVDMKGGIACFAAAVARHIEKHGPPAGSISFLITGDEEGPAINGTVKLLQWAAERGEQWDASLVGEPTNPDQLGDMIKIGRRGSISGFITVHGVQGHAAYPHLADNPVRSIVKLTEALLDPPFDAGTDNFQPSNLEVTTIDVGNAATNVIPAKATAAFNIRFNDTWTVETLRAEILARLDAAAADQTLRPGREPTKYDITWSDRPSQVFLTRNNALIASLSSAVENVTGHTPKLSTTGGTSDARFIKDYCPVVEFGLVGQTMHMVDERVAVADLETLTEIYETFIQRWFANAEL</sequence>